<reference key="1">
    <citation type="submission" date="2006-09" db="EMBL/GenBank/DDBJ databases">
        <authorList>
            <consortium name="The Klebsiella pneumonia Genome Sequencing Project"/>
            <person name="McClelland M."/>
            <person name="Sanderson E.K."/>
            <person name="Spieth J."/>
            <person name="Clifton W.S."/>
            <person name="Latreille P."/>
            <person name="Sabo A."/>
            <person name="Pepin K."/>
            <person name="Bhonagiri V."/>
            <person name="Porwollik S."/>
            <person name="Ali J."/>
            <person name="Wilson R.K."/>
        </authorList>
    </citation>
    <scope>NUCLEOTIDE SEQUENCE [LARGE SCALE GENOMIC DNA]</scope>
    <source>
        <strain>ATCC 700721 / MGH 78578</strain>
    </source>
</reference>
<dbReference type="EMBL" id="CP000647">
    <property type="protein sequence ID" value="ABR75905.1"/>
    <property type="molecule type" value="Genomic_DNA"/>
</dbReference>
<dbReference type="RefSeq" id="WP_002892173.1">
    <property type="nucleotide sequence ID" value="NC_009648.1"/>
</dbReference>
<dbReference type="SMR" id="A6T5N4"/>
<dbReference type="STRING" id="272620.KPN_00453"/>
<dbReference type="jPOST" id="A6T5N4"/>
<dbReference type="PaxDb" id="272620-KPN_00453"/>
<dbReference type="EnsemblBacteria" id="ABR75905">
    <property type="protein sequence ID" value="ABR75905"/>
    <property type="gene ID" value="KPN_00453"/>
</dbReference>
<dbReference type="KEGG" id="kpn:KPN_00453"/>
<dbReference type="HOGENOM" id="CLU_140930_0_0_6"/>
<dbReference type="Proteomes" id="UP000000265">
    <property type="component" value="Chromosome"/>
</dbReference>
<dbReference type="GO" id="GO:0043590">
    <property type="term" value="C:bacterial nucleoid"/>
    <property type="evidence" value="ECO:0007669"/>
    <property type="project" value="UniProtKB-UniRule"/>
</dbReference>
<dbReference type="GO" id="GO:0005829">
    <property type="term" value="C:cytosol"/>
    <property type="evidence" value="ECO:0007669"/>
    <property type="project" value="TreeGrafter"/>
</dbReference>
<dbReference type="GO" id="GO:0003677">
    <property type="term" value="F:DNA binding"/>
    <property type="evidence" value="ECO:0007669"/>
    <property type="project" value="UniProtKB-UniRule"/>
</dbReference>
<dbReference type="FunFam" id="3.30.1310.10:FF:000001">
    <property type="entry name" value="Nucleoid-associated protein YbaB"/>
    <property type="match status" value="1"/>
</dbReference>
<dbReference type="Gene3D" id="3.30.1310.10">
    <property type="entry name" value="Nucleoid-associated protein YbaB-like domain"/>
    <property type="match status" value="1"/>
</dbReference>
<dbReference type="HAMAP" id="MF_00274">
    <property type="entry name" value="DNA_YbaB_EbfC"/>
    <property type="match status" value="1"/>
</dbReference>
<dbReference type="InterPro" id="IPR036894">
    <property type="entry name" value="YbaB-like_sf"/>
</dbReference>
<dbReference type="InterPro" id="IPR004401">
    <property type="entry name" value="YbaB/EbfC"/>
</dbReference>
<dbReference type="NCBIfam" id="TIGR00103">
    <property type="entry name" value="DNA_YbaB_EbfC"/>
    <property type="match status" value="1"/>
</dbReference>
<dbReference type="PANTHER" id="PTHR33449">
    <property type="entry name" value="NUCLEOID-ASSOCIATED PROTEIN YBAB"/>
    <property type="match status" value="1"/>
</dbReference>
<dbReference type="PANTHER" id="PTHR33449:SF1">
    <property type="entry name" value="NUCLEOID-ASSOCIATED PROTEIN YBAB"/>
    <property type="match status" value="1"/>
</dbReference>
<dbReference type="Pfam" id="PF02575">
    <property type="entry name" value="YbaB_DNA_bd"/>
    <property type="match status" value="1"/>
</dbReference>
<dbReference type="PIRSF" id="PIRSF004555">
    <property type="entry name" value="UCP004555"/>
    <property type="match status" value="1"/>
</dbReference>
<dbReference type="SUPFAM" id="SSF82607">
    <property type="entry name" value="YbaB-like"/>
    <property type="match status" value="1"/>
</dbReference>
<organism>
    <name type="scientific">Klebsiella pneumoniae subsp. pneumoniae (strain ATCC 700721 / MGH 78578)</name>
    <dbReference type="NCBI Taxonomy" id="272620"/>
    <lineage>
        <taxon>Bacteria</taxon>
        <taxon>Pseudomonadati</taxon>
        <taxon>Pseudomonadota</taxon>
        <taxon>Gammaproteobacteria</taxon>
        <taxon>Enterobacterales</taxon>
        <taxon>Enterobacteriaceae</taxon>
        <taxon>Klebsiella/Raoultella group</taxon>
        <taxon>Klebsiella</taxon>
        <taxon>Klebsiella pneumoniae complex</taxon>
    </lineage>
</organism>
<evidence type="ECO:0000255" key="1">
    <source>
        <dbReference type="HAMAP-Rule" id="MF_00274"/>
    </source>
</evidence>
<accession>A6T5N4</accession>
<name>Y444_KLEP7</name>
<comment type="function">
    <text evidence="1">Binds to DNA and alters its conformation. May be involved in regulation of gene expression, nucleoid organization and DNA protection.</text>
</comment>
<comment type="subunit">
    <text evidence="1">Homodimer.</text>
</comment>
<comment type="subcellular location">
    <subcellularLocation>
        <location evidence="1">Cytoplasm</location>
        <location evidence="1">Nucleoid</location>
    </subcellularLocation>
</comment>
<comment type="similarity">
    <text evidence="1">Belongs to the YbaB/EbfC family.</text>
</comment>
<sequence>MFGGKGGLGNLMKQAQQMQEKMQKMQEEIAQLEVTGESGAGLVKVTINGAHNCRRVEIDPSLLEDDKEMLEDLVAAAFNDAARRIEETQKEKMASVSAGMQLPPGFKMPF</sequence>
<keyword id="KW-0963">Cytoplasm</keyword>
<keyword id="KW-0238">DNA-binding</keyword>
<proteinExistence type="inferred from homology"/>
<protein>
    <recommendedName>
        <fullName evidence="1">Nucleoid-associated protein KPN78578_04440</fullName>
    </recommendedName>
</protein>
<feature type="chain" id="PRO_1000059200" description="Nucleoid-associated protein KPN78578_04440">
    <location>
        <begin position="1"/>
        <end position="110"/>
    </location>
</feature>
<gene>
    <name type="ordered locus">KPN78578_04440</name>
    <name type="ORF">KPN_00453</name>
</gene>